<protein>
    <recommendedName>
        <fullName evidence="1">Large ribosomal subunit protein bL32</fullName>
    </recommendedName>
    <alternativeName>
        <fullName evidence="2">50S ribosomal protein L32</fullName>
    </alternativeName>
</protein>
<evidence type="ECO:0000255" key="1">
    <source>
        <dbReference type="HAMAP-Rule" id="MF_00340"/>
    </source>
</evidence>
<evidence type="ECO:0000305" key="2"/>
<comment type="similarity">
    <text evidence="1">Belongs to the bacterial ribosomal protein bL32 family.</text>
</comment>
<accession>B7H6Q9</accession>
<gene>
    <name evidence="1" type="primary">rpmF</name>
    <name type="ordered locus">BCB4264_A4024</name>
</gene>
<dbReference type="EMBL" id="CP001176">
    <property type="protein sequence ID" value="ACK62337.1"/>
    <property type="molecule type" value="Genomic_DNA"/>
</dbReference>
<dbReference type="RefSeq" id="WP_001984764.1">
    <property type="nucleotide sequence ID" value="NZ_VEHB01000002.1"/>
</dbReference>
<dbReference type="SMR" id="B7H6Q9"/>
<dbReference type="GeneID" id="93007188"/>
<dbReference type="KEGG" id="bcb:BCB4264_A4024"/>
<dbReference type="HOGENOM" id="CLU_129084_1_3_9"/>
<dbReference type="Proteomes" id="UP000007096">
    <property type="component" value="Chromosome"/>
</dbReference>
<dbReference type="GO" id="GO:0015934">
    <property type="term" value="C:large ribosomal subunit"/>
    <property type="evidence" value="ECO:0007669"/>
    <property type="project" value="InterPro"/>
</dbReference>
<dbReference type="GO" id="GO:0003735">
    <property type="term" value="F:structural constituent of ribosome"/>
    <property type="evidence" value="ECO:0007669"/>
    <property type="project" value="InterPro"/>
</dbReference>
<dbReference type="GO" id="GO:0006412">
    <property type="term" value="P:translation"/>
    <property type="evidence" value="ECO:0007669"/>
    <property type="project" value="UniProtKB-UniRule"/>
</dbReference>
<dbReference type="HAMAP" id="MF_00340">
    <property type="entry name" value="Ribosomal_bL32"/>
    <property type="match status" value="1"/>
</dbReference>
<dbReference type="InterPro" id="IPR002677">
    <property type="entry name" value="Ribosomal_bL32"/>
</dbReference>
<dbReference type="InterPro" id="IPR044957">
    <property type="entry name" value="Ribosomal_bL32_bact"/>
</dbReference>
<dbReference type="InterPro" id="IPR011332">
    <property type="entry name" value="Ribosomal_zn-bd"/>
</dbReference>
<dbReference type="NCBIfam" id="TIGR01031">
    <property type="entry name" value="rpmF_bact"/>
    <property type="match status" value="1"/>
</dbReference>
<dbReference type="PANTHER" id="PTHR35534">
    <property type="entry name" value="50S RIBOSOMAL PROTEIN L32"/>
    <property type="match status" value="1"/>
</dbReference>
<dbReference type="PANTHER" id="PTHR35534:SF2">
    <property type="entry name" value="LARGE RIBOSOMAL SUBUNIT PROTEIN BL32"/>
    <property type="match status" value="1"/>
</dbReference>
<dbReference type="Pfam" id="PF01783">
    <property type="entry name" value="Ribosomal_L32p"/>
    <property type="match status" value="1"/>
</dbReference>
<dbReference type="SUPFAM" id="SSF57829">
    <property type="entry name" value="Zn-binding ribosomal proteins"/>
    <property type="match status" value="1"/>
</dbReference>
<reference key="1">
    <citation type="submission" date="2008-10" db="EMBL/GenBank/DDBJ databases">
        <title>Genome sequence of Bacillus cereus B4264.</title>
        <authorList>
            <person name="Dodson R.J."/>
            <person name="Durkin A.S."/>
            <person name="Rosovitz M.J."/>
            <person name="Rasko D.A."/>
            <person name="Hoffmaster A."/>
            <person name="Ravel J."/>
            <person name="Sutton G."/>
        </authorList>
    </citation>
    <scope>NUCLEOTIDE SEQUENCE [LARGE SCALE GENOMIC DNA]</scope>
    <source>
        <strain>B4264</strain>
    </source>
</reference>
<keyword id="KW-0687">Ribonucleoprotein</keyword>
<keyword id="KW-0689">Ribosomal protein</keyword>
<sequence>MAVPFRRTSKTVKRKRRTHFKLSVPGMVECPSCGEAKLAHRVCKACGTYKGKEVISK</sequence>
<feature type="chain" id="PRO_1000120086" description="Large ribosomal subunit protein bL32">
    <location>
        <begin position="1"/>
        <end position="57"/>
    </location>
</feature>
<name>RL32_BACC4</name>
<proteinExistence type="inferred from homology"/>
<organism>
    <name type="scientific">Bacillus cereus (strain B4264)</name>
    <dbReference type="NCBI Taxonomy" id="405532"/>
    <lineage>
        <taxon>Bacteria</taxon>
        <taxon>Bacillati</taxon>
        <taxon>Bacillota</taxon>
        <taxon>Bacilli</taxon>
        <taxon>Bacillales</taxon>
        <taxon>Bacillaceae</taxon>
        <taxon>Bacillus</taxon>
        <taxon>Bacillus cereus group</taxon>
    </lineage>
</organism>